<protein>
    <recommendedName>
        <fullName>Transcriptional and immune response regulator</fullName>
    </recommendedName>
</protein>
<proteinExistence type="inferred from homology"/>
<dbReference type="EMBL" id="BT021051">
    <property type="protein sequence ID" value="AAX09068.1"/>
    <property type="molecule type" value="mRNA"/>
</dbReference>
<dbReference type="EMBL" id="BC103283">
    <property type="protein sequence ID" value="AAI03284.1"/>
    <property type="molecule type" value="mRNA"/>
</dbReference>
<dbReference type="RefSeq" id="NP_001030567.1">
    <property type="nucleotide sequence ID" value="NM_001035490.2"/>
</dbReference>
<dbReference type="SMR" id="Q5E969"/>
<dbReference type="FunCoup" id="Q5E969">
    <property type="interactions" value="123"/>
</dbReference>
<dbReference type="STRING" id="9913.ENSBTAP00000044556"/>
<dbReference type="PaxDb" id="9913-ENSBTAP00000044556"/>
<dbReference type="Ensembl" id="ENSBTAT00000047341.5">
    <property type="protein sequence ID" value="ENSBTAP00000044556.3"/>
    <property type="gene ID" value="ENSBTAG00000033304.5"/>
</dbReference>
<dbReference type="Ensembl" id="ENSBTAT00000087617.1">
    <property type="protein sequence ID" value="ENSBTAP00000084628.1"/>
    <property type="gene ID" value="ENSBTAG00000033304.5"/>
</dbReference>
<dbReference type="GeneID" id="617047"/>
<dbReference type="KEGG" id="bta:617047"/>
<dbReference type="CTD" id="56892"/>
<dbReference type="VEuPathDB" id="HostDB:ENSBTAG00000033304"/>
<dbReference type="VGNC" id="VGNC:49157">
    <property type="gene designation" value="TCIM"/>
</dbReference>
<dbReference type="eggNOG" id="ENOG502S1N0">
    <property type="taxonomic scope" value="Eukaryota"/>
</dbReference>
<dbReference type="GeneTree" id="ENSGT00390000003458"/>
<dbReference type="HOGENOM" id="CLU_172922_0_0_1"/>
<dbReference type="InParanoid" id="Q5E969"/>
<dbReference type="OMA" id="HGCRFDT"/>
<dbReference type="OrthoDB" id="8681175at2759"/>
<dbReference type="TreeFam" id="TF338287"/>
<dbReference type="Proteomes" id="UP000009136">
    <property type="component" value="Chromosome 27"/>
</dbReference>
<dbReference type="Bgee" id="ENSBTAG00000033304">
    <property type="expression patterns" value="Expressed in bone marrow and 101 other cell types or tissues"/>
</dbReference>
<dbReference type="GO" id="GO:0005737">
    <property type="term" value="C:cytoplasm"/>
    <property type="evidence" value="ECO:0000250"/>
    <property type="project" value="UniProtKB"/>
</dbReference>
<dbReference type="GO" id="GO:0005829">
    <property type="term" value="C:cytosol"/>
    <property type="evidence" value="ECO:0000318"/>
    <property type="project" value="GO_Central"/>
</dbReference>
<dbReference type="GO" id="GO:0016607">
    <property type="term" value="C:nuclear speck"/>
    <property type="evidence" value="ECO:0000250"/>
    <property type="project" value="UniProtKB"/>
</dbReference>
<dbReference type="GO" id="GO:0005730">
    <property type="term" value="C:nucleolus"/>
    <property type="evidence" value="ECO:0000250"/>
    <property type="project" value="UniProtKB"/>
</dbReference>
<dbReference type="GO" id="GO:0005634">
    <property type="term" value="C:nucleus"/>
    <property type="evidence" value="ECO:0000250"/>
    <property type="project" value="UniProtKB"/>
</dbReference>
<dbReference type="GO" id="GO:0005886">
    <property type="term" value="C:plasma membrane"/>
    <property type="evidence" value="ECO:0007669"/>
    <property type="project" value="Ensembl"/>
</dbReference>
<dbReference type="GO" id="GO:0005112">
    <property type="term" value="F:Notch binding"/>
    <property type="evidence" value="ECO:0000318"/>
    <property type="project" value="GO_Central"/>
</dbReference>
<dbReference type="GO" id="GO:0006915">
    <property type="term" value="P:apoptotic process"/>
    <property type="evidence" value="ECO:0007669"/>
    <property type="project" value="UniProtKB-KW"/>
</dbReference>
<dbReference type="GO" id="GO:0034605">
    <property type="term" value="P:cellular response to heat"/>
    <property type="evidence" value="ECO:0000250"/>
    <property type="project" value="UniProtKB"/>
</dbReference>
<dbReference type="GO" id="GO:0002264">
    <property type="term" value="P:endothelial cell activation involved in immune response"/>
    <property type="evidence" value="ECO:0000250"/>
    <property type="project" value="UniProtKB"/>
</dbReference>
<dbReference type="GO" id="GO:0043066">
    <property type="term" value="P:negative regulation of apoptotic process"/>
    <property type="evidence" value="ECO:0007669"/>
    <property type="project" value="Ensembl"/>
</dbReference>
<dbReference type="GO" id="GO:0045746">
    <property type="term" value="P:negative regulation of Notch signaling pathway"/>
    <property type="evidence" value="ECO:0000250"/>
    <property type="project" value="UniProtKB"/>
</dbReference>
<dbReference type="GO" id="GO:1901224">
    <property type="term" value="P:positive regulation of non-canonical NF-kappaB signal transduction"/>
    <property type="evidence" value="ECO:0000250"/>
    <property type="project" value="UniProtKB"/>
</dbReference>
<dbReference type="GO" id="GO:0010739">
    <property type="term" value="P:positive regulation of protein kinase A signaling"/>
    <property type="evidence" value="ECO:0007669"/>
    <property type="project" value="Ensembl"/>
</dbReference>
<dbReference type="GO" id="GO:1902806">
    <property type="term" value="P:regulation of cell cycle G1/S phase transition"/>
    <property type="evidence" value="ECO:0000250"/>
    <property type="project" value="UniProtKB"/>
</dbReference>
<dbReference type="GO" id="GO:1903706">
    <property type="term" value="P:regulation of hemopoiesis"/>
    <property type="evidence" value="ECO:0007669"/>
    <property type="project" value="Ensembl"/>
</dbReference>
<dbReference type="InterPro" id="IPR020282">
    <property type="entry name" value="Avpi1/C8orf4_dom"/>
</dbReference>
<dbReference type="InterPro" id="IPR039580">
    <property type="entry name" value="Tcim"/>
</dbReference>
<dbReference type="PANTHER" id="PTHR32358">
    <property type="entry name" value="TRANSCRIPTIONAL AND IMMUNE RESPONSE REGULATOR"/>
    <property type="match status" value="1"/>
</dbReference>
<dbReference type="PANTHER" id="PTHR32358:SF1">
    <property type="entry name" value="TRANSCRIPTIONAL AND IMMUNE RESPONSE REGULATOR"/>
    <property type="match status" value="1"/>
</dbReference>
<dbReference type="Pfam" id="PF15063">
    <property type="entry name" value="TC1"/>
    <property type="match status" value="1"/>
</dbReference>
<gene>
    <name type="primary">TCIM</name>
    <name type="synonym">TC1</name>
</gene>
<comment type="function">
    <text evidence="1 2">Seems to be involved in the regulation of cell growth an differentiation, may play different and opposite roles depending on the tissue or cell type. May enhance the WNT-CTNNB1 pathway by relieving antagonistic activity of CBY1. Enhances the proliferation of follicular dendritic cells. Plays a role in the mitogen-activated MAPK2/3 signaling pathway, positively regulates G1-to-S-phase transition of the cell cycle. In endothelial cells, enhances key inflammatory mediators and inflammatory response through the modulation of NF-kappaB transcriptional regulatory activity. Involved in the regulation of heat shock response, seems to play a positive feedback with HSF1 to modulate heat-shock downstream gene expression (By similarity). Plays a role in the regulation of hematopoiesis even if the mechanisms are unknown (By similarity). In cancers such as thyroid or lung cancer, it has been described as promoter of cell proliferation, G1-to-S-phase transition and inhibitor of apoptosis. However, it negatively regulates self-renewal of liver cancer cells via suppresion of NOTCH2 signaling (By similarity).</text>
</comment>
<comment type="subunit">
    <text evidence="2">Monomer. Interacts with NOTCH2 (via ANK repeats), the interaction inhibits the nuclear translocation of NOTCH2 N2ICD. Interacts (C-terminus) with CBY1 (C-terminus), TCIM competes with CTNNB1 for the interaction with CBY1.</text>
</comment>
<comment type="subcellular location">
    <subcellularLocation>
        <location evidence="2">Cytoplasm</location>
    </subcellularLocation>
    <subcellularLocation>
        <location evidence="2">Nucleus</location>
        <location evidence="2">Nucleolus</location>
    </subcellularLocation>
    <subcellularLocation>
        <location evidence="2">Nucleus speckle</location>
    </subcellularLocation>
    <subcellularLocation>
        <location evidence="2">Nucleus</location>
    </subcellularLocation>
    <text evidence="2">Localizes in nucleus speckles in presence of CBY1. Translocates to the nucleus upon cellular stress such as H(2)O(2).</text>
</comment>
<organism>
    <name type="scientific">Bos taurus</name>
    <name type="common">Bovine</name>
    <dbReference type="NCBI Taxonomy" id="9913"/>
    <lineage>
        <taxon>Eukaryota</taxon>
        <taxon>Metazoa</taxon>
        <taxon>Chordata</taxon>
        <taxon>Craniata</taxon>
        <taxon>Vertebrata</taxon>
        <taxon>Euteleostomi</taxon>
        <taxon>Mammalia</taxon>
        <taxon>Eutheria</taxon>
        <taxon>Laurasiatheria</taxon>
        <taxon>Artiodactyla</taxon>
        <taxon>Ruminantia</taxon>
        <taxon>Pecora</taxon>
        <taxon>Bovidae</taxon>
        <taxon>Bovinae</taxon>
        <taxon>Bos</taxon>
    </lineage>
</organism>
<evidence type="ECO:0000250" key="1">
    <source>
        <dbReference type="UniProtKB" id="Q9D915"/>
    </source>
</evidence>
<evidence type="ECO:0000250" key="2">
    <source>
        <dbReference type="UniProtKB" id="Q9NR00"/>
    </source>
</evidence>
<feature type="chain" id="PRO_0000089604" description="Transcriptional and immune response regulator">
    <location>
        <begin position="1"/>
        <end position="106"/>
    </location>
</feature>
<sequence length="106" mass="12278">MKAKPSHPAFSMSTSLRVSPSIHGYHFDTASRKKAVGNIFENIDQEALQRLFRNSGDKKAEERAKIIFAIDQDLEEKTRALMALKKRTKDKLFQFLKLRKYSIKVH</sequence>
<name>TCIM_BOVIN</name>
<keyword id="KW-0053">Apoptosis</keyword>
<keyword id="KW-0963">Cytoplasm</keyword>
<keyword id="KW-0539">Nucleus</keyword>
<keyword id="KW-1185">Reference proteome</keyword>
<accession>Q5E969</accession>
<accession>Q3ZBI1</accession>
<reference key="1">
    <citation type="journal article" date="2005" name="BMC Genomics">
        <title>Characterization of 954 bovine full-CDS cDNA sequences.</title>
        <authorList>
            <person name="Harhay G.P."/>
            <person name="Sonstegard T.S."/>
            <person name="Keele J.W."/>
            <person name="Heaton M.P."/>
            <person name="Clawson M.L."/>
            <person name="Snelling W.M."/>
            <person name="Wiedmann R.T."/>
            <person name="Van Tassell C.P."/>
            <person name="Smith T.P.L."/>
        </authorList>
    </citation>
    <scope>NUCLEOTIDE SEQUENCE [LARGE SCALE MRNA]</scope>
</reference>
<reference key="2">
    <citation type="submission" date="2005-08" db="EMBL/GenBank/DDBJ databases">
        <authorList>
            <consortium name="NIH - Mammalian Gene Collection (MGC) project"/>
        </authorList>
    </citation>
    <scope>NUCLEOTIDE SEQUENCE [LARGE SCALE MRNA]</scope>
    <source>
        <strain>Hereford</strain>
        <tissue>Fetal liver</tissue>
    </source>
</reference>